<name>DXS_LEPBJ</name>
<feature type="chain" id="PRO_1000019036" description="1-deoxy-D-xylulose-5-phosphate synthase">
    <location>
        <begin position="1"/>
        <end position="635"/>
    </location>
</feature>
<feature type="binding site" evidence="1">
    <location>
        <position position="77"/>
    </location>
    <ligand>
        <name>thiamine diphosphate</name>
        <dbReference type="ChEBI" id="CHEBI:58937"/>
    </ligand>
</feature>
<feature type="binding site" evidence="1">
    <location>
        <begin position="118"/>
        <end position="120"/>
    </location>
    <ligand>
        <name>thiamine diphosphate</name>
        <dbReference type="ChEBI" id="CHEBI:58937"/>
    </ligand>
</feature>
<feature type="binding site" evidence="1">
    <location>
        <position position="150"/>
    </location>
    <ligand>
        <name>Mg(2+)</name>
        <dbReference type="ChEBI" id="CHEBI:18420"/>
    </ligand>
</feature>
<feature type="binding site" evidence="1">
    <location>
        <begin position="151"/>
        <end position="152"/>
    </location>
    <ligand>
        <name>thiamine diphosphate</name>
        <dbReference type="ChEBI" id="CHEBI:58937"/>
    </ligand>
</feature>
<feature type="binding site" evidence="1">
    <location>
        <position position="179"/>
    </location>
    <ligand>
        <name>Mg(2+)</name>
        <dbReference type="ChEBI" id="CHEBI:18420"/>
    </ligand>
</feature>
<feature type="binding site" evidence="1">
    <location>
        <position position="179"/>
    </location>
    <ligand>
        <name>thiamine diphosphate</name>
        <dbReference type="ChEBI" id="CHEBI:58937"/>
    </ligand>
</feature>
<feature type="binding site" evidence="1">
    <location>
        <position position="290"/>
    </location>
    <ligand>
        <name>thiamine diphosphate</name>
        <dbReference type="ChEBI" id="CHEBI:58937"/>
    </ligand>
</feature>
<feature type="binding site" evidence="1">
    <location>
        <position position="372"/>
    </location>
    <ligand>
        <name>thiamine diphosphate</name>
        <dbReference type="ChEBI" id="CHEBI:58937"/>
    </ligand>
</feature>
<protein>
    <recommendedName>
        <fullName evidence="1">1-deoxy-D-xylulose-5-phosphate synthase</fullName>
        <ecNumber evidence="1">2.2.1.7</ecNumber>
    </recommendedName>
    <alternativeName>
        <fullName evidence="1">1-deoxyxylulose-5-phosphate synthase</fullName>
        <shortName evidence="1">DXP synthase</shortName>
        <shortName evidence="1">DXPS</shortName>
    </alternativeName>
</protein>
<dbReference type="EC" id="2.2.1.7" evidence="1"/>
<dbReference type="EMBL" id="CP000350">
    <property type="protein sequence ID" value="ABJ75561.1"/>
    <property type="molecule type" value="Genomic_DNA"/>
</dbReference>
<dbReference type="RefSeq" id="WP_011669757.1">
    <property type="nucleotide sequence ID" value="NC_008510.1"/>
</dbReference>
<dbReference type="SMR" id="Q04U59"/>
<dbReference type="KEGG" id="lbj:LBJ_0917"/>
<dbReference type="HOGENOM" id="CLU_009227_1_4_12"/>
<dbReference type="UniPathway" id="UPA00064">
    <property type="reaction ID" value="UER00091"/>
</dbReference>
<dbReference type="Proteomes" id="UP000000656">
    <property type="component" value="Chromosome 1"/>
</dbReference>
<dbReference type="GO" id="GO:0005829">
    <property type="term" value="C:cytosol"/>
    <property type="evidence" value="ECO:0007669"/>
    <property type="project" value="TreeGrafter"/>
</dbReference>
<dbReference type="GO" id="GO:0008661">
    <property type="term" value="F:1-deoxy-D-xylulose-5-phosphate synthase activity"/>
    <property type="evidence" value="ECO:0007669"/>
    <property type="project" value="UniProtKB-UniRule"/>
</dbReference>
<dbReference type="GO" id="GO:0000287">
    <property type="term" value="F:magnesium ion binding"/>
    <property type="evidence" value="ECO:0007669"/>
    <property type="project" value="UniProtKB-UniRule"/>
</dbReference>
<dbReference type="GO" id="GO:0030976">
    <property type="term" value="F:thiamine pyrophosphate binding"/>
    <property type="evidence" value="ECO:0007669"/>
    <property type="project" value="UniProtKB-UniRule"/>
</dbReference>
<dbReference type="GO" id="GO:0052865">
    <property type="term" value="P:1-deoxy-D-xylulose 5-phosphate biosynthetic process"/>
    <property type="evidence" value="ECO:0007669"/>
    <property type="project" value="UniProtKB-UniPathway"/>
</dbReference>
<dbReference type="GO" id="GO:0019288">
    <property type="term" value="P:isopentenyl diphosphate biosynthetic process, methylerythritol 4-phosphate pathway"/>
    <property type="evidence" value="ECO:0007669"/>
    <property type="project" value="TreeGrafter"/>
</dbReference>
<dbReference type="GO" id="GO:0016114">
    <property type="term" value="P:terpenoid biosynthetic process"/>
    <property type="evidence" value="ECO:0007669"/>
    <property type="project" value="UniProtKB-UniRule"/>
</dbReference>
<dbReference type="GO" id="GO:0009228">
    <property type="term" value="P:thiamine biosynthetic process"/>
    <property type="evidence" value="ECO:0007669"/>
    <property type="project" value="UniProtKB-UniRule"/>
</dbReference>
<dbReference type="CDD" id="cd02007">
    <property type="entry name" value="TPP_DXS"/>
    <property type="match status" value="1"/>
</dbReference>
<dbReference type="CDD" id="cd07033">
    <property type="entry name" value="TPP_PYR_DXS_TK_like"/>
    <property type="match status" value="1"/>
</dbReference>
<dbReference type="Gene3D" id="3.40.50.920">
    <property type="match status" value="1"/>
</dbReference>
<dbReference type="Gene3D" id="3.40.50.970">
    <property type="match status" value="2"/>
</dbReference>
<dbReference type="HAMAP" id="MF_00315">
    <property type="entry name" value="DXP_synth"/>
    <property type="match status" value="1"/>
</dbReference>
<dbReference type="InterPro" id="IPR005477">
    <property type="entry name" value="Dxylulose-5-P_synthase"/>
</dbReference>
<dbReference type="InterPro" id="IPR029061">
    <property type="entry name" value="THDP-binding"/>
</dbReference>
<dbReference type="InterPro" id="IPR009014">
    <property type="entry name" value="Transketo_C/PFOR_II"/>
</dbReference>
<dbReference type="InterPro" id="IPR005475">
    <property type="entry name" value="Transketolase-like_Pyr-bd"/>
</dbReference>
<dbReference type="InterPro" id="IPR033248">
    <property type="entry name" value="Transketolase_C"/>
</dbReference>
<dbReference type="InterPro" id="IPR049557">
    <property type="entry name" value="Transketolase_CS"/>
</dbReference>
<dbReference type="NCBIfam" id="TIGR00204">
    <property type="entry name" value="dxs"/>
    <property type="match status" value="1"/>
</dbReference>
<dbReference type="NCBIfam" id="NF003933">
    <property type="entry name" value="PRK05444.2-2"/>
    <property type="match status" value="1"/>
</dbReference>
<dbReference type="PANTHER" id="PTHR43322">
    <property type="entry name" value="1-D-DEOXYXYLULOSE 5-PHOSPHATE SYNTHASE-RELATED"/>
    <property type="match status" value="1"/>
</dbReference>
<dbReference type="PANTHER" id="PTHR43322:SF5">
    <property type="entry name" value="1-DEOXY-D-XYLULOSE-5-PHOSPHATE SYNTHASE, CHLOROPLASTIC"/>
    <property type="match status" value="1"/>
</dbReference>
<dbReference type="Pfam" id="PF13292">
    <property type="entry name" value="DXP_synthase_N"/>
    <property type="match status" value="1"/>
</dbReference>
<dbReference type="Pfam" id="PF02779">
    <property type="entry name" value="Transket_pyr"/>
    <property type="match status" value="1"/>
</dbReference>
<dbReference type="Pfam" id="PF02780">
    <property type="entry name" value="Transketolase_C"/>
    <property type="match status" value="1"/>
</dbReference>
<dbReference type="SMART" id="SM00861">
    <property type="entry name" value="Transket_pyr"/>
    <property type="match status" value="1"/>
</dbReference>
<dbReference type="SUPFAM" id="SSF52518">
    <property type="entry name" value="Thiamin diphosphate-binding fold (THDP-binding)"/>
    <property type="match status" value="2"/>
</dbReference>
<dbReference type="SUPFAM" id="SSF52922">
    <property type="entry name" value="TK C-terminal domain-like"/>
    <property type="match status" value="1"/>
</dbReference>
<dbReference type="PROSITE" id="PS00801">
    <property type="entry name" value="TRANSKETOLASE_1"/>
    <property type="match status" value="1"/>
</dbReference>
<reference key="1">
    <citation type="journal article" date="2006" name="Proc. Natl. Acad. Sci. U.S.A.">
        <title>Genome reduction in Leptospira borgpetersenii reflects limited transmission potential.</title>
        <authorList>
            <person name="Bulach D.M."/>
            <person name="Zuerner R.L."/>
            <person name="Wilson P."/>
            <person name="Seemann T."/>
            <person name="McGrath A."/>
            <person name="Cullen P.A."/>
            <person name="Davis J."/>
            <person name="Johnson M."/>
            <person name="Kuczek E."/>
            <person name="Alt D.P."/>
            <person name="Peterson-Burch B."/>
            <person name="Coppel R.L."/>
            <person name="Rood J.I."/>
            <person name="Davies J.K."/>
            <person name="Adler B."/>
        </authorList>
    </citation>
    <scope>NUCLEOTIDE SEQUENCE [LARGE SCALE GENOMIC DNA]</scope>
    <source>
        <strain>JB197</strain>
    </source>
</reference>
<gene>
    <name evidence="1" type="primary">dxs</name>
    <name type="ordered locus">LBJ_0917</name>
</gene>
<comment type="function">
    <text evidence="1">Catalyzes the acyloin condensation reaction between C atoms 2 and 3 of pyruvate and glyceraldehyde 3-phosphate to yield 1-deoxy-D-xylulose-5-phosphate (DXP).</text>
</comment>
<comment type="catalytic activity">
    <reaction evidence="1">
        <text>D-glyceraldehyde 3-phosphate + pyruvate + H(+) = 1-deoxy-D-xylulose 5-phosphate + CO2</text>
        <dbReference type="Rhea" id="RHEA:12605"/>
        <dbReference type="ChEBI" id="CHEBI:15361"/>
        <dbReference type="ChEBI" id="CHEBI:15378"/>
        <dbReference type="ChEBI" id="CHEBI:16526"/>
        <dbReference type="ChEBI" id="CHEBI:57792"/>
        <dbReference type="ChEBI" id="CHEBI:59776"/>
        <dbReference type="EC" id="2.2.1.7"/>
    </reaction>
</comment>
<comment type="cofactor">
    <cofactor evidence="1">
        <name>Mg(2+)</name>
        <dbReference type="ChEBI" id="CHEBI:18420"/>
    </cofactor>
    <text evidence="1">Binds 1 Mg(2+) ion per subunit.</text>
</comment>
<comment type="cofactor">
    <cofactor evidence="1">
        <name>thiamine diphosphate</name>
        <dbReference type="ChEBI" id="CHEBI:58937"/>
    </cofactor>
    <text evidence="1">Binds 1 thiamine pyrophosphate per subunit.</text>
</comment>
<comment type="pathway">
    <text evidence="1">Metabolic intermediate biosynthesis; 1-deoxy-D-xylulose 5-phosphate biosynthesis; 1-deoxy-D-xylulose 5-phosphate from D-glyceraldehyde 3-phosphate and pyruvate: step 1/1.</text>
</comment>
<comment type="subunit">
    <text evidence="1">Homodimer.</text>
</comment>
<comment type="similarity">
    <text evidence="1">Belongs to the transketolase family. DXPS subfamily.</text>
</comment>
<keyword id="KW-0414">Isoprene biosynthesis</keyword>
<keyword id="KW-0460">Magnesium</keyword>
<keyword id="KW-0479">Metal-binding</keyword>
<keyword id="KW-0784">Thiamine biosynthesis</keyword>
<keyword id="KW-0786">Thiamine pyrophosphate</keyword>
<keyword id="KW-0808">Transferase</keyword>
<organism>
    <name type="scientific">Leptospira borgpetersenii serovar Hardjo-bovis (strain JB197)</name>
    <dbReference type="NCBI Taxonomy" id="355277"/>
    <lineage>
        <taxon>Bacteria</taxon>
        <taxon>Pseudomonadati</taxon>
        <taxon>Spirochaetota</taxon>
        <taxon>Spirochaetia</taxon>
        <taxon>Leptospirales</taxon>
        <taxon>Leptospiraceae</taxon>
        <taxon>Leptospira</taxon>
    </lineage>
</organism>
<accession>Q04U59</accession>
<proteinExistence type="inferred from homology"/>
<sequence length="635" mass="70591">MQQESTLLDKIDYPADLRNIPLEKLPQVCKEVRNYIIDTLSGVGGHFASNLGVVELTVALHYVFDTPKDRLIWDVGHQTYPHKILTGRKDRLKTVRKFNGLSGFPKREESPYDLYNTGHAGTSISQALGEAAARDLTKGEDYSVVAIIGDASIATGMALEAMNHAGHLKKDMIVILNDNYMSISKNVGSISNYLNNIITSHFYNHWKRVFYTFLKWLPIVGPAAERFFKKVEKGFKDVLTPGGLFEDLGFGYIGPEDGHDVIRLVNMLAKVKKMKGPILLHLITQKGKGYDPAERDPIKYHGVTPFRKEDGAMDSGDTSKIAYSKIVGRMLSILTEANPKIAAITPAMIEGSGLKEYAEKYPDHLFDVGIAEQHSVAFAGAMTNGSIIPYMCIYSTFLTRAIDQLVQDVSLMNLPVRFVIDRAGCVGPDGETHQGLFDLGYLLGLPNMDVFVPSNGQDMIDSLRWMETYDKAPIAIRFPKANVDLKTLDFYKEVDLRPGTFRVLKRGTDLALLSIGSMIDEAKKATEILESAGFSVTLIDLIWLRPLGVEALNEELSNVRRFVIIDESYVDAGASGYLLNRILPENLSKYVKTFGFPPEPIHHGERKEIIQAYRLDGASIAESVADVLKKNLIKP</sequence>
<evidence type="ECO:0000255" key="1">
    <source>
        <dbReference type="HAMAP-Rule" id="MF_00315"/>
    </source>
</evidence>